<gene>
    <name type="primary">pld</name>
</gene>
<reference key="1">
    <citation type="journal article" date="1990" name="J. Bacteriol.">
        <title>Cloning, nucleotide sequence, and expression in Escherichia coli of the phospholipase D gene from Corynebacterium pseudotuberculosis.</title>
        <authorList>
            <person name="Hodgson A.L.M."/>
            <person name="Bird P."/>
            <person name="Nisbet I.T."/>
        </authorList>
    </citation>
    <scope>NUCLEOTIDE SEQUENCE [GENOMIC DNA]</scope>
    <scope>PROTEIN SEQUENCE OF 25-47</scope>
</reference>
<reference key="2">
    <citation type="journal article" date="1990" name="Infect. Immun.">
        <title>Cloning and expression of the phospholipase D gene from Corynebacterium pseudotuberculosis in Escherichia coli.</title>
        <authorList>
            <person name="Songer J.G."/>
            <person name="Libby S.J."/>
            <person name="Iandolo J.J."/>
            <person name="Cuevas W.A."/>
        </authorList>
    </citation>
    <scope>NUCLEOTIDE SEQUENCE [GENOMIC DNA]</scope>
    <scope>FUNCTION</scope>
    <scope>CATALYTIC ACTIVITY</scope>
    <source>
        <strain>Biovar ovis / Isolate Whetten 1</strain>
    </source>
</reference>
<reference key="3">
    <citation type="journal article" date="1995" name="Gene">
        <title>Toxic phospholipases D of Corynebacterium pseudotuberculosis, C. ulcerans and Arcanobacterium haemolyticum: cloning and sequence homology.</title>
        <authorList>
            <person name="McNamara P.J."/>
            <person name="Cuevas W.A."/>
            <person name="Songer J.G."/>
        </authorList>
    </citation>
    <scope>NUCLEOTIDE SEQUENCE [GENOMIC DNA]</scope>
    <source>
        <strain>Biovar equi / Isolate 155</strain>
    </source>
</reference>
<reference key="4">
    <citation type="journal article" date="1994" name="Mol. Microbiol.">
        <title>Targeted mutagenesis of the phospholipase D gene results in decreased virulence of Corynebacterium pseudotuberculosis.</title>
        <authorList>
            <person name="McNamara P.J."/>
            <person name="Bradley G.A."/>
            <person name="Songer J.G."/>
        </authorList>
    </citation>
    <scope>MUTAGENESIS</scope>
    <source>
        <strain>Biovar ovis / Isolate Whetten 1</strain>
    </source>
</reference>
<reference key="5">
    <citation type="journal article" date="2004" name="J. Biol. Chem.">
        <title>Spider and bacterial sphingomyelinases D target cellular lysophosphatidic acid receptors by hydrolyzing lysophosphatidylcholine.</title>
        <authorList>
            <person name="van Meeteren L.A."/>
            <person name="Frederiks F."/>
            <person name="Giepmans B.N."/>
            <person name="Pedrosa M.F."/>
            <person name="Billington S.J."/>
            <person name="Jost B.H."/>
            <person name="Tambourgi D.V."/>
            <person name="Moolenaar W.H."/>
        </authorList>
    </citation>
    <scope>FUNCTION</scope>
    <scope>CATALYTIC ACTIVITY</scope>
    <scope>COFACTOR</scope>
    <scope>BIOPHYSICOCHEMICAL PROPERTIES</scope>
    <scope>SUBSTRATE SPECIFICITY</scope>
</reference>
<keyword id="KW-0903">Direct protein sequencing</keyword>
<keyword id="KW-0378">Hydrolase</keyword>
<keyword id="KW-0442">Lipid degradation</keyword>
<keyword id="KW-0443">Lipid metabolism</keyword>
<keyword id="KW-0460">Magnesium</keyword>
<keyword id="KW-0732">Signal</keyword>
<keyword id="KW-0843">Virulence</keyword>
<proteinExistence type="evidence at protein level"/>
<name>PLD_CORPS</name>
<dbReference type="EC" id="3.1.4.-" evidence="2"/>
<dbReference type="EC" id="3.1.4.41" evidence="2 3"/>
<dbReference type="EMBL" id="L16587">
    <property type="protein sequence ID" value="AAA64910.1"/>
    <property type="molecule type" value="Genomic_DNA"/>
</dbReference>
<dbReference type="EMBL" id="L16586">
    <property type="protein sequence ID" value="AAA99867.1"/>
    <property type="molecule type" value="Genomic_DNA"/>
</dbReference>
<dbReference type="PIR" id="A35125">
    <property type="entry name" value="A35125"/>
</dbReference>
<dbReference type="RefSeq" id="WP_013240889.1">
    <property type="nucleotide sequence ID" value="NZ_RBXH01000001.1"/>
</dbReference>
<dbReference type="RefSeq" id="WP_014366232.1">
    <property type="nucleotide sequence ID" value="NZ_CP085681.1"/>
</dbReference>
<dbReference type="SMR" id="P20626"/>
<dbReference type="KEGG" id="cpse:CPTA_00550"/>
<dbReference type="KEGG" id="cpsf:CPTC_00644"/>
<dbReference type="KEGG" id="cpsu:CPTB_00982"/>
<dbReference type="PATRIC" id="fig|1719.1052.peg.28"/>
<dbReference type="OMA" id="FVWFDIK"/>
<dbReference type="SABIO-RK" id="P20626"/>
<dbReference type="GO" id="GO:0016020">
    <property type="term" value="C:membrane"/>
    <property type="evidence" value="ECO:0007669"/>
    <property type="project" value="GOC"/>
</dbReference>
<dbReference type="GO" id="GO:0042597">
    <property type="term" value="C:periplasmic space"/>
    <property type="evidence" value="ECO:0000314"/>
    <property type="project" value="UniProtKB"/>
</dbReference>
<dbReference type="GO" id="GO:0050290">
    <property type="term" value="F:sphingomyelin phosphodiesterase D activity"/>
    <property type="evidence" value="ECO:0000314"/>
    <property type="project" value="UniProtKB"/>
</dbReference>
<dbReference type="GO" id="GO:0051701">
    <property type="term" value="P:biological process involved in interaction with host"/>
    <property type="evidence" value="ECO:0000315"/>
    <property type="project" value="UniProtKB"/>
</dbReference>
<dbReference type="GO" id="GO:0016042">
    <property type="term" value="P:lipid catabolic process"/>
    <property type="evidence" value="ECO:0007669"/>
    <property type="project" value="UniProtKB-KW"/>
</dbReference>
<dbReference type="GO" id="GO:0006684">
    <property type="term" value="P:sphingomyelin metabolic process"/>
    <property type="evidence" value="ECO:0000314"/>
    <property type="project" value="UniProtKB"/>
</dbReference>
<dbReference type="CDD" id="cd08576">
    <property type="entry name" value="GDPD_like_SMaseD_PLD"/>
    <property type="match status" value="1"/>
</dbReference>
<dbReference type="Gene3D" id="3.20.20.190">
    <property type="entry name" value="Phosphatidylinositol (PI) phosphodiesterase"/>
    <property type="match status" value="1"/>
</dbReference>
<dbReference type="InterPro" id="IPR017946">
    <property type="entry name" value="PLC-like_Pdiesterase_TIM-brl"/>
</dbReference>
<dbReference type="InterPro" id="IPR016674">
    <property type="entry name" value="SMase_D/PLipase_D"/>
</dbReference>
<dbReference type="PIRSF" id="PIRSF016632">
    <property type="entry name" value="Phospholipase_actinobac/fun"/>
    <property type="match status" value="1"/>
</dbReference>
<dbReference type="SUPFAM" id="SSF51695">
    <property type="entry name" value="PLC-like phosphodiesterases"/>
    <property type="match status" value="1"/>
</dbReference>
<accession>P20626</accession>
<accession>Q59314</accession>
<evidence type="ECO:0000255" key="1"/>
<evidence type="ECO:0000269" key="2">
    <source>
    </source>
</evidence>
<evidence type="ECO:0000269" key="3">
    <source>
    </source>
</evidence>
<evidence type="ECO:0000269" key="4">
    <source>
    </source>
</evidence>
<evidence type="ECO:0000303" key="5">
    <source>
    </source>
</evidence>
<evidence type="ECO:0000303" key="6">
    <source>
    </source>
</evidence>
<evidence type="ECO:0000303" key="7">
    <source>
    </source>
</evidence>
<evidence type="ECO:0000305" key="8"/>
<evidence type="ECO:0000305" key="9">
    <source>
    </source>
</evidence>
<comment type="function">
    <text evidence="2 3">Virulence factor affecting bacterial dissemination and survival within the host (PubMed:2403529). Has magnesium-dependent catalytic activity toward sphingomyelin (SM) and acyl- and alkyl-lysophosphatidylcholine (LPC), but not toward sphingosylphosphorylcholine (SPC) and phosphatidylcholine (PC) (PubMed:14732720, PubMed:2403529). Lysophosphatidic acid (LPA), assumed to result from LPC hydrolysis, evokes pathophysiological responses after LPA receptor internalization (PubMed:14732720). Shows hemolytic activity (PubMed:2403529).</text>
</comment>
<comment type="catalytic activity">
    <reaction evidence="2 3">
        <text>a sphingomyelin + H2O = an N-acylsphing-4-enine 1-phosphate + choline + H(+)</text>
        <dbReference type="Rhea" id="RHEA:20984"/>
        <dbReference type="ChEBI" id="CHEBI:15354"/>
        <dbReference type="ChEBI" id="CHEBI:15377"/>
        <dbReference type="ChEBI" id="CHEBI:15378"/>
        <dbReference type="ChEBI" id="CHEBI:17636"/>
        <dbReference type="ChEBI" id="CHEBI:57674"/>
        <dbReference type="EC" id="3.1.4.41"/>
    </reaction>
</comment>
<comment type="catalytic activity">
    <reaction evidence="2">
        <text>1-(9Z-octadecenoyl)-sn-glycero-3-phosphocholine + H2O = 1-(9Z-octadecenoyl)-sn-glycero-3-phosphate + choline + H(+)</text>
        <dbReference type="Rhea" id="RHEA:38915"/>
        <dbReference type="ChEBI" id="CHEBI:15354"/>
        <dbReference type="ChEBI" id="CHEBI:15377"/>
        <dbReference type="ChEBI" id="CHEBI:15378"/>
        <dbReference type="ChEBI" id="CHEBI:28610"/>
        <dbReference type="ChEBI" id="CHEBI:74544"/>
    </reaction>
</comment>
<comment type="catalytic activity">
    <reaction evidence="2">
        <text>1-O-hexadecyl-sn-glycero-3-phosphocholine + H2O = 1-O-hexadecyl-sn-glycero-3-phosphate + choline + H(+)</text>
        <dbReference type="Rhea" id="RHEA:41143"/>
        <dbReference type="ChEBI" id="CHEBI:15354"/>
        <dbReference type="ChEBI" id="CHEBI:15377"/>
        <dbReference type="ChEBI" id="CHEBI:15378"/>
        <dbReference type="ChEBI" id="CHEBI:64496"/>
        <dbReference type="ChEBI" id="CHEBI:77580"/>
    </reaction>
</comment>
<comment type="cofactor">
    <cofactor evidence="2">
        <name>Mg(2+)</name>
        <dbReference type="ChEBI" id="CHEBI:18420"/>
    </cofactor>
</comment>
<comment type="biophysicochemical properties">
    <kinetics>
        <KM evidence="2">21.8 uM for 1-oleoyl-LPC</KM>
        <Vmax evidence="2">66.0 nmol/min/mg enzyme toward 1-oleoyl-LPC</Vmax>
    </kinetics>
</comment>
<comment type="similarity">
    <text evidence="8">Belongs to the sphingomyelinase D/phospholipase D family.</text>
</comment>
<feature type="signal peptide" evidence="4">
    <location>
        <begin position="1"/>
        <end position="24"/>
    </location>
</feature>
<feature type="chain" id="PRO_0000022066" description="Phospholipase D" evidence="9">
    <location>
        <begin position="25"/>
        <end position="307"/>
    </location>
</feature>
<feature type="active site" evidence="1">
    <location>
        <position position="44"/>
    </location>
</feature>
<feature type="sequence variant" description="In strain: Biovar equi /isolate 155.">
    <original>VV</original>
    <variation>FA</variation>
    <location>
        <begin position="5"/>
        <end position="6"/>
    </location>
</feature>
<feature type="sequence variant" description="In strain: Biovar equi / isolate 155.">
    <original>F</original>
    <variation>L</variation>
    <location>
        <position position="8"/>
    </location>
</feature>
<feature type="sequence variant" description="In strain: Biovar equi / isolate 155.">
    <original>E</original>
    <variation>G</variation>
    <location>
        <position position="189"/>
    </location>
</feature>
<feature type="sequence variant" description="In strain: Biovar equi / isolate 155.">
    <original>N</original>
    <variation>D</variation>
    <location>
        <position position="205"/>
    </location>
</feature>
<feature type="sequence variant" description="In strain: Biovar equi / isolate 155.">
    <original>I</original>
    <variation>M</variation>
    <location>
        <position position="270"/>
    </location>
</feature>
<feature type="sequence variant" description="In strain: Biovar equi / isolate 155.">
    <original>A</original>
    <variation>P</variation>
    <location>
        <position position="277"/>
    </location>
</feature>
<organism>
    <name type="scientific">Corynebacterium pseudotuberculosis</name>
    <dbReference type="NCBI Taxonomy" id="1719"/>
    <lineage>
        <taxon>Bacteria</taxon>
        <taxon>Bacillati</taxon>
        <taxon>Actinomycetota</taxon>
        <taxon>Actinomycetes</taxon>
        <taxon>Mycobacteriales</taxon>
        <taxon>Corynebacteriaceae</taxon>
        <taxon>Corynebacterium</taxon>
    </lineage>
</organism>
<protein>
    <recommendedName>
        <fullName evidence="6 7">Phospholipase D</fullName>
        <shortName evidence="6 7">PLD</shortName>
        <ecNumber evidence="2">3.1.4.-</ecNumber>
    </recommendedName>
    <alternativeName>
        <fullName>Choline phosphatase</fullName>
    </alternativeName>
    <alternativeName>
        <fullName evidence="5">SM/LPC-specific PLD</fullName>
    </alternativeName>
    <alternativeName>
        <fullName evidence="5">Sphingomyelinase D</fullName>
        <shortName evidence="5">SMaseD</shortName>
        <ecNumber evidence="2 3">3.1.4.41</ecNumber>
    </alternativeName>
</protein>
<sequence>MREKVVLFLSIIMAIMLPVGNAAAAPVVHNPASTANRPVYAIAHRVLTTQGVDDAVAIGANALEIDFTAWGRGWWADHDGIPTSAGATAEEIFKHIADKRKQGANITFTWLDIKNPDYCRDARSVCSINALRDLARKYLEPAGVRVLYGFYKTVGGPAWKTITADLRDGEAVALSGPAQDVLNDFARSENKILTKQKIADYGYYNINQGFGNCYGTWNRTCDQLRKSSEARDQGKLGKTFGWTIATGQDARVNDLLGKANVDGLIFGFKITHFYRHADTENSFKAIKRWVDKHSATHHLATVADNPW</sequence>